<organism>
    <name type="scientific">Phytophthora capsici</name>
    <dbReference type="NCBI Taxonomy" id="4784"/>
    <lineage>
        <taxon>Eukaryota</taxon>
        <taxon>Sar</taxon>
        <taxon>Stramenopiles</taxon>
        <taxon>Oomycota</taxon>
        <taxon>Peronosporales</taxon>
        <taxon>Peronosporaceae</taxon>
        <taxon>Phytophthora</taxon>
    </lineage>
</organism>
<dbReference type="EMBL" id="KF220581">
    <property type="protein sequence ID" value="AGV79332.1"/>
    <property type="molecule type" value="mRNA"/>
</dbReference>
<dbReference type="SMR" id="T2FFK2"/>
<dbReference type="VEuPathDB" id="FungiDB:DVH05_010062"/>
<dbReference type="GO" id="GO:0005576">
    <property type="term" value="C:extracellular region"/>
    <property type="evidence" value="ECO:0007669"/>
    <property type="project" value="UniProtKB-SubCell"/>
</dbReference>
<dbReference type="InterPro" id="IPR008701">
    <property type="entry name" value="NPP1"/>
</dbReference>
<dbReference type="PANTHER" id="PTHR33657">
    <property type="entry name" value="DOMAIN PROTEIN, PUTATIVE (AFU_ORTHOLOGUE AFUA_5G00600)-RELATED"/>
    <property type="match status" value="1"/>
</dbReference>
<dbReference type="PANTHER" id="PTHR33657:SF8">
    <property type="entry name" value="DOMAIN PROTEIN, PUTATIVE (AFU_ORTHOLOGUE AFUA_5G00600)-RELATED"/>
    <property type="match status" value="1"/>
</dbReference>
<dbReference type="Pfam" id="PF05630">
    <property type="entry name" value="NPP1"/>
    <property type="match status" value="1"/>
</dbReference>
<dbReference type="PIRSF" id="PIRSF029958">
    <property type="entry name" value="Necrosis-inducing_protein"/>
    <property type="match status" value="1"/>
</dbReference>
<sequence length="246" mass="27396">MNFRAFLLAAIAGIATINATEVNRVNHDQVQPFAQPEPITDSQKSAVKYKPQLHISYGCHPYAAVQTDGSASGGLEWSGRVDGDCTGSQLGSQVYSRSDWYHDKWAIMYAWYFPKGRYHLGGHRHYWEYAIVWTDSPTSSNSSIQGVSMSAGVGYGKATPPMLKYIDGNSIKFDSHFSLLGNKAALQLTKEAGERQDLITWDQLTVAARDTLNGDALDGKAWFTDKDEVPFKDDIFVKRLQKAFPF</sequence>
<keyword id="KW-0325">Glycoprotein</keyword>
<keyword id="KW-0964">Secreted</keyword>
<keyword id="KW-0732">Signal</keyword>
<keyword id="KW-0843">Virulence</keyword>
<comment type="function">
    <text evidence="4">Secreted effector that contributes strongly to virulence during infection by P.capsici (PubMed:29572661). Induces cell death in the Solanaceae, including Nicotiana benthamiana and hot pepper (PubMed:29572661).</text>
</comment>
<comment type="subcellular location">
    <subcellularLocation>
        <location evidence="7">Secreted</location>
    </subcellularLocation>
</comment>
<comment type="domain">
    <text evidence="7">Key residues/motif important for the effector activities are degenerated in most NLPs, including the nlp24 peptide consisting of the conserved region I (11-aa immunogenic part) and conserved region II (the heptapeptide GHRHDWE motif) that is important for phytotoxic activity.</text>
</comment>
<comment type="similarity">
    <text evidence="6">Belongs to the Necrosis inducing protein (NPP1) family.</text>
</comment>
<proteinExistence type="evidence at transcript level"/>
<feature type="signal peptide" evidence="2">
    <location>
        <begin position="1"/>
        <end position="19"/>
    </location>
</feature>
<feature type="chain" id="PRO_5004588006" description="NLP effector protein Pc118548">
    <location>
        <begin position="20"/>
        <end position="246"/>
    </location>
</feature>
<feature type="short sequence motif" description="Hepta-peptide GHRHDWE motif" evidence="1">
    <location>
        <begin position="122"/>
        <end position="128"/>
    </location>
</feature>
<feature type="glycosylation site" description="N-linked (GlcNAc...) asparagine" evidence="3">
    <location>
        <position position="141"/>
    </location>
</feature>
<name>NLP48_PHYCP</name>
<protein>
    <recommendedName>
        <fullName evidence="5">NLP effector protein Pc118548</fullName>
    </recommendedName>
    <alternativeName>
        <fullName evidence="5">Necrosis-inducing Pc118548</fullName>
    </alternativeName>
    <alternativeName>
        <fullName evidence="5">Nep1-like protein Pc118548</fullName>
    </alternativeName>
</protein>
<accession>T2FFK2</accession>
<evidence type="ECO:0000250" key="1">
    <source>
        <dbReference type="UniProtKB" id="L7NCS1"/>
    </source>
</evidence>
<evidence type="ECO:0000255" key="2"/>
<evidence type="ECO:0000255" key="3">
    <source>
        <dbReference type="PROSITE-ProRule" id="PRU00498"/>
    </source>
</evidence>
<evidence type="ECO:0000269" key="4">
    <source>
    </source>
</evidence>
<evidence type="ECO:0000303" key="5">
    <source>
    </source>
</evidence>
<evidence type="ECO:0000305" key="6"/>
<evidence type="ECO:0000305" key="7">
    <source>
    </source>
</evidence>
<reference key="1">
    <citation type="journal article" date="2013" name="PLoS ONE">
        <title>RNA-Seq Reveals Infection-Related Gene Expression Changes in Phytophthora capsici.</title>
        <authorList>
            <person name="Chen X.R."/>
            <person name="Xing Y.P."/>
            <person name="Li Y.P."/>
            <person name="Tong Y.H."/>
            <person name="Xu J.Y."/>
        </authorList>
    </citation>
    <scope>NUCLEOTIDE SEQUENCE [MRNA]</scope>
    <source>
        <strain>Pc537</strain>
    </source>
</reference>
<reference key="2">
    <citation type="journal article" date="2018" name="Mol. Genet. Genomics">
        <title>Identification and functional analysis of the NLP-encoding genes from the phytopathogenic oomycete Phytophthora capsici.</title>
        <authorList>
            <person name="Chen X.R."/>
            <person name="Huang S.X."/>
            <person name="Zhang Y."/>
            <person name="Sheng G.L."/>
            <person name="Li Y.P."/>
            <person name="Zhu F."/>
        </authorList>
    </citation>
    <scope>FUNCTION</scope>
    <scope>DOMAIN</scope>
    <source>
        <strain>Pc537</strain>
    </source>
</reference>
<gene>
    <name evidence="5" type="ORF">Pc118548</name>
</gene>